<gene>
    <name type="primary">GPR137C</name>
    <name type="synonym">TM7SF1L2</name>
</gene>
<sequence>MRVSVPGPAAAAAPAAGREPSTPGGGSGGGGAVAAASGAAVPGSVQLALSVLHALLYAALFAFAYLQLWRLLLYRERRLSYQSLCLFLCLLWAALRTTLFSAAFSLSGSLPLLRPPAHLHFFPHWLLYCFPSCLQFSTLCLLNLYLAEVICKVRCATELDRHKILLHLGFIMASLLFLVVNLTCAMLVHGDVPENQLKWTVFVRALINDSLFILCAISLVCYICKITKMSSANVYLESKGMSLCQTVVVGSVVILLYSSRACYNLVVVTISQDTLESPFNYGWDNLSDKAHVEDISGEEYIVFGMVLFLWEHVPAWSVVLFFRAQRLNQNLAPAGMINSHSYSSRAYFFDNPRRYDSDDDLPRLGSSREGSLPNSQSLGWYGTMTGCGSSSYTVTPHLNGPMTDTAPLLFTCSNLDLNNHHSLYVTPQN</sequence>
<name>G137C_HUMAN</name>
<proteinExistence type="evidence at protein level"/>
<evidence type="ECO:0000255" key="1"/>
<evidence type="ECO:0000256" key="2">
    <source>
        <dbReference type="SAM" id="MobiDB-lite"/>
    </source>
</evidence>
<evidence type="ECO:0000269" key="3">
    <source>
    </source>
</evidence>
<evidence type="ECO:0000269" key="4">
    <source>
    </source>
</evidence>
<evidence type="ECO:0000305" key="5"/>
<keyword id="KW-0325">Glycoprotein</keyword>
<keyword id="KW-0458">Lysosome</keyword>
<keyword id="KW-0472">Membrane</keyword>
<keyword id="KW-1267">Proteomics identification</keyword>
<keyword id="KW-1185">Reference proteome</keyword>
<keyword id="KW-0812">Transmembrane</keyword>
<keyword id="KW-1133">Transmembrane helix</keyword>
<feature type="chain" id="PRO_0000304803" description="Integral membrane protein GPR137C">
    <location>
        <begin position="1"/>
        <end position="429"/>
    </location>
</feature>
<feature type="topological domain" description="Lumenal" evidence="5">
    <location>
        <begin position="1"/>
        <end position="48"/>
    </location>
</feature>
<feature type="transmembrane region" description="Helical; Name=1" evidence="1">
    <location>
        <begin position="49"/>
        <end position="69"/>
    </location>
</feature>
<feature type="topological domain" description="Cytoplasmic" evidence="5">
    <location>
        <begin position="70"/>
        <end position="83"/>
    </location>
</feature>
<feature type="transmembrane region" description="Helical; Name=2" evidence="1">
    <location>
        <begin position="84"/>
        <end position="104"/>
    </location>
</feature>
<feature type="topological domain" description="Lumenal" evidence="5">
    <location>
        <begin position="105"/>
        <end position="120"/>
    </location>
</feature>
<feature type="transmembrane region" description="Helical; Name=3" evidence="1">
    <location>
        <begin position="121"/>
        <end position="141"/>
    </location>
</feature>
<feature type="topological domain" description="Cytoplasmic" evidence="5">
    <location>
        <begin position="142"/>
        <end position="167"/>
    </location>
</feature>
<feature type="transmembrane region" description="Helical; Name=4" evidence="1">
    <location>
        <begin position="168"/>
        <end position="188"/>
    </location>
</feature>
<feature type="topological domain" description="Lumenal" evidence="5">
    <location>
        <begin position="189"/>
        <end position="205"/>
    </location>
</feature>
<feature type="transmembrane region" description="Helical; Name=5" evidence="1">
    <location>
        <begin position="206"/>
        <end position="226"/>
    </location>
</feature>
<feature type="topological domain" description="Cytoplasmic" evidence="5">
    <location>
        <begin position="227"/>
        <end position="246"/>
    </location>
</feature>
<feature type="transmembrane region" description="Helical; Name=6" evidence="1">
    <location>
        <begin position="247"/>
        <end position="267"/>
    </location>
</feature>
<feature type="topological domain" description="Lumenal" evidence="5">
    <location>
        <begin position="268"/>
        <end position="300"/>
    </location>
</feature>
<feature type="transmembrane region" description="Helical; Name=7" evidence="1">
    <location>
        <begin position="301"/>
        <end position="321"/>
    </location>
</feature>
<feature type="topological domain" description="Cytoplasmic" evidence="5">
    <location>
        <begin position="322"/>
        <end position="429"/>
    </location>
</feature>
<feature type="region of interest" description="Disordered" evidence="2">
    <location>
        <begin position="1"/>
        <end position="29"/>
    </location>
</feature>
<feature type="compositionally biased region" description="Low complexity" evidence="2">
    <location>
        <begin position="1"/>
        <end position="17"/>
    </location>
</feature>
<feature type="glycosylation site" description="N-linked (GlcNAc...) asparagine" evidence="1">
    <location>
        <position position="285"/>
    </location>
</feature>
<feature type="sequence variant" id="VAR_053880" description="In dbSNP:rs762063." evidence="3">
    <original>V</original>
    <variation>I</variation>
    <location>
        <position position="248"/>
    </location>
</feature>
<feature type="sequence conflict" description="In Ref. 3; CAD39035." evidence="5" ref="3">
    <original>K</original>
    <variation>KITGSHSFLWLNSTPLC</variation>
    <location>
        <position position="239"/>
    </location>
</feature>
<accession>Q8N3F9</accession>
<accession>Q86SM2</accession>
<comment type="function">
    <text evidence="4">Lysosomal integral membrane protein that may regulate MTORC1 complex translocation to lysosomes.</text>
</comment>
<comment type="subcellular location">
    <subcellularLocation>
        <location evidence="4">Lysosome membrane</location>
        <topology evidence="1">Multi-pass membrane protein</topology>
    </subcellularLocation>
</comment>
<comment type="similarity">
    <text evidence="5">Belongs to the GPR137 family.</text>
</comment>
<reference key="1">
    <citation type="journal article" date="2003" name="Nature">
        <title>The DNA sequence and analysis of human chromosome 14.</title>
        <authorList>
            <person name="Heilig R."/>
            <person name="Eckenberg R."/>
            <person name="Petit J.-L."/>
            <person name="Fonknechten N."/>
            <person name="Da Silva C."/>
            <person name="Cattolico L."/>
            <person name="Levy M."/>
            <person name="Barbe V."/>
            <person name="De Berardinis V."/>
            <person name="Ureta-Vidal A."/>
            <person name="Pelletier E."/>
            <person name="Vico V."/>
            <person name="Anthouard V."/>
            <person name="Rowen L."/>
            <person name="Madan A."/>
            <person name="Qin S."/>
            <person name="Sun H."/>
            <person name="Du H."/>
            <person name="Pepin K."/>
            <person name="Artiguenave F."/>
            <person name="Robert C."/>
            <person name="Cruaud C."/>
            <person name="Bruels T."/>
            <person name="Jaillon O."/>
            <person name="Friedlander L."/>
            <person name="Samson G."/>
            <person name="Brottier P."/>
            <person name="Cure S."/>
            <person name="Segurens B."/>
            <person name="Aniere F."/>
            <person name="Samain S."/>
            <person name="Crespeau H."/>
            <person name="Abbasi N."/>
            <person name="Aiach N."/>
            <person name="Boscus D."/>
            <person name="Dickhoff R."/>
            <person name="Dors M."/>
            <person name="Dubois I."/>
            <person name="Friedman C."/>
            <person name="Gouyvenoux M."/>
            <person name="James R."/>
            <person name="Madan A."/>
            <person name="Mairey-Estrada B."/>
            <person name="Mangenot S."/>
            <person name="Martins N."/>
            <person name="Menard M."/>
            <person name="Oztas S."/>
            <person name="Ratcliffe A."/>
            <person name="Shaffer T."/>
            <person name="Trask B."/>
            <person name="Vacherie B."/>
            <person name="Bellemere C."/>
            <person name="Belser C."/>
            <person name="Besnard-Gonnet M."/>
            <person name="Bartol-Mavel D."/>
            <person name="Boutard M."/>
            <person name="Briez-Silla S."/>
            <person name="Combette S."/>
            <person name="Dufosse-Laurent V."/>
            <person name="Ferron C."/>
            <person name="Lechaplais C."/>
            <person name="Louesse C."/>
            <person name="Muselet D."/>
            <person name="Magdelenat G."/>
            <person name="Pateau E."/>
            <person name="Petit E."/>
            <person name="Sirvain-Trukniewicz P."/>
            <person name="Trybou A."/>
            <person name="Vega-Czarny N."/>
            <person name="Bataille E."/>
            <person name="Bluet E."/>
            <person name="Bordelais I."/>
            <person name="Dubois M."/>
            <person name="Dumont C."/>
            <person name="Guerin T."/>
            <person name="Haffray S."/>
            <person name="Hammadi R."/>
            <person name="Muanga J."/>
            <person name="Pellouin V."/>
            <person name="Robert D."/>
            <person name="Wunderle E."/>
            <person name="Gauguet G."/>
            <person name="Roy A."/>
            <person name="Sainte-Marthe L."/>
            <person name="Verdier J."/>
            <person name="Verdier-Discala C."/>
            <person name="Hillier L.W."/>
            <person name="Fulton L."/>
            <person name="McPherson J."/>
            <person name="Matsuda F."/>
            <person name="Wilson R."/>
            <person name="Scarpelli C."/>
            <person name="Gyapay G."/>
            <person name="Wincker P."/>
            <person name="Saurin W."/>
            <person name="Quetier F."/>
            <person name="Waterston R."/>
            <person name="Hood L."/>
            <person name="Weissenbach J."/>
        </authorList>
    </citation>
    <scope>NUCLEOTIDE SEQUENCE [LARGE SCALE GENOMIC DNA]</scope>
</reference>
<reference key="2">
    <citation type="journal article" date="2003" name="Proc. Natl. Acad. Sci. U.S.A.">
        <title>The G protein-coupled receptor repertoires of human and mouse.</title>
        <authorList>
            <person name="Vassilatis D.K."/>
            <person name="Hohmann J.G."/>
            <person name="Zeng H."/>
            <person name="Li F."/>
            <person name="Ranchalis J.E."/>
            <person name="Mortrud M.T."/>
            <person name="Brown A."/>
            <person name="Rodriguez S.S."/>
            <person name="Weller J.R."/>
            <person name="Wright A.C."/>
            <person name="Bergmann J.E."/>
            <person name="Gaitanaris G.A."/>
        </authorList>
    </citation>
    <scope>NUCLEOTIDE SEQUENCE [LARGE SCALE MRNA] OF 32-148</scope>
</reference>
<reference key="3">
    <citation type="journal article" date="2007" name="BMC Genomics">
        <title>The full-ORF clone resource of the German cDNA consortium.</title>
        <authorList>
            <person name="Bechtel S."/>
            <person name="Rosenfelder H."/>
            <person name="Duda A."/>
            <person name="Schmidt C.P."/>
            <person name="Ernst U."/>
            <person name="Wellenreuther R."/>
            <person name="Mehrle A."/>
            <person name="Schuster C."/>
            <person name="Bahr A."/>
            <person name="Bloecker H."/>
            <person name="Heubner D."/>
            <person name="Hoerlein A."/>
            <person name="Michel G."/>
            <person name="Wedler H."/>
            <person name="Koehrer K."/>
            <person name="Ottenwaelder B."/>
            <person name="Poustka A."/>
            <person name="Wiemann S."/>
            <person name="Schupp I."/>
        </authorList>
    </citation>
    <scope>NUCLEOTIDE SEQUENCE [LARGE SCALE MRNA] OF 48-429</scope>
    <scope>VARIANT ILE-248</scope>
    <source>
        <tissue>Melanoma</tissue>
    </source>
</reference>
<reference key="4">
    <citation type="journal article" date="2019" name="Nat. Cell Biol.">
        <title>The lysosomal GPCR-like protein GPR137B regulates Rag and mTORC1 localization and activity.</title>
        <authorList>
            <person name="Gan L."/>
            <person name="Seki A."/>
            <person name="Shen K."/>
            <person name="Iyer H."/>
            <person name="Han K."/>
            <person name="Hayer A."/>
            <person name="Wollman R."/>
            <person name="Ge X."/>
            <person name="Lin J.R."/>
            <person name="Dey G."/>
            <person name="Talbot W.S."/>
            <person name="Meyer T."/>
        </authorList>
    </citation>
    <scope>SUBCELLULAR LOCATION</scope>
    <scope>FUNCTION</scope>
</reference>
<protein>
    <recommendedName>
        <fullName>Integral membrane protein GPR137C</fullName>
    </recommendedName>
    <alternativeName>
        <fullName>Transmembrane 7 superfamily member 1-like 2 protein</fullName>
    </alternativeName>
</protein>
<organism>
    <name type="scientific">Homo sapiens</name>
    <name type="common">Human</name>
    <dbReference type="NCBI Taxonomy" id="9606"/>
    <lineage>
        <taxon>Eukaryota</taxon>
        <taxon>Metazoa</taxon>
        <taxon>Chordata</taxon>
        <taxon>Craniata</taxon>
        <taxon>Vertebrata</taxon>
        <taxon>Euteleostomi</taxon>
        <taxon>Mammalia</taxon>
        <taxon>Eutheria</taxon>
        <taxon>Euarchontoglires</taxon>
        <taxon>Primates</taxon>
        <taxon>Haplorrhini</taxon>
        <taxon>Catarrhini</taxon>
        <taxon>Hominidae</taxon>
        <taxon>Homo</taxon>
    </lineage>
</organism>
<dbReference type="EMBL" id="AL157971">
    <property type="status" value="NOT_ANNOTATED_CDS"/>
    <property type="molecule type" value="Genomic_DNA"/>
</dbReference>
<dbReference type="EMBL" id="AY255590">
    <property type="protein sequence ID" value="AAO85102.1"/>
    <property type="molecule type" value="mRNA"/>
</dbReference>
<dbReference type="EMBL" id="AL834372">
    <property type="protein sequence ID" value="CAD39035.1"/>
    <property type="molecule type" value="mRNA"/>
</dbReference>
<dbReference type="CCDS" id="CCDS45106.1"/>
<dbReference type="RefSeq" id="NP_001093122.1">
    <property type="nucleotide sequence ID" value="NM_001099652.2"/>
</dbReference>
<dbReference type="SMR" id="Q8N3F9"/>
<dbReference type="BioGRID" id="129601">
    <property type="interactions" value="6"/>
</dbReference>
<dbReference type="FunCoup" id="Q8N3F9">
    <property type="interactions" value="53"/>
</dbReference>
<dbReference type="IntAct" id="Q8N3F9">
    <property type="interactions" value="2"/>
</dbReference>
<dbReference type="MINT" id="Q8N3F9"/>
<dbReference type="STRING" id="9606.ENSP00000315106"/>
<dbReference type="GlyCosmos" id="Q8N3F9">
    <property type="glycosylation" value="1 site, No reported glycans"/>
</dbReference>
<dbReference type="GlyGen" id="Q8N3F9">
    <property type="glycosylation" value="1 site"/>
</dbReference>
<dbReference type="iPTMnet" id="Q8N3F9"/>
<dbReference type="PhosphoSitePlus" id="Q8N3F9"/>
<dbReference type="BioMuta" id="GPR137C"/>
<dbReference type="DMDM" id="158563844"/>
<dbReference type="MassIVE" id="Q8N3F9"/>
<dbReference type="PaxDb" id="9606-ENSP00000315106"/>
<dbReference type="PeptideAtlas" id="Q8N3F9"/>
<dbReference type="ProteomicsDB" id="71799"/>
<dbReference type="Antibodypedia" id="23869">
    <property type="antibodies" value="67 antibodies from 25 providers"/>
</dbReference>
<dbReference type="DNASU" id="283554"/>
<dbReference type="Ensembl" id="ENST00000321662.11">
    <property type="protein sequence ID" value="ENSP00000315106.6"/>
    <property type="gene ID" value="ENSG00000180998.12"/>
</dbReference>
<dbReference type="GeneID" id="283554"/>
<dbReference type="KEGG" id="hsa:283554"/>
<dbReference type="MANE-Select" id="ENST00000321662.11">
    <property type="protein sequence ID" value="ENSP00000315106.6"/>
    <property type="RefSeq nucleotide sequence ID" value="NM_001099652.2"/>
    <property type="RefSeq protein sequence ID" value="NP_001093122.1"/>
</dbReference>
<dbReference type="UCSC" id="uc001wzu.4">
    <property type="organism name" value="human"/>
</dbReference>
<dbReference type="AGR" id="HGNC:25445"/>
<dbReference type="CTD" id="283554"/>
<dbReference type="DisGeNET" id="283554"/>
<dbReference type="GeneCards" id="GPR137C"/>
<dbReference type="HGNC" id="HGNC:25445">
    <property type="gene designation" value="GPR137C"/>
</dbReference>
<dbReference type="HPA" id="ENSG00000180998">
    <property type="expression patterns" value="Group enriched (brain, epididymis, retina)"/>
</dbReference>
<dbReference type="neXtProt" id="NX_Q8N3F9"/>
<dbReference type="OpenTargets" id="ENSG00000180998"/>
<dbReference type="PharmGKB" id="PA143485483"/>
<dbReference type="VEuPathDB" id="HostDB:ENSG00000180998"/>
<dbReference type="eggNOG" id="ENOG502QQ83">
    <property type="taxonomic scope" value="Eukaryota"/>
</dbReference>
<dbReference type="GeneTree" id="ENSGT00940000153986"/>
<dbReference type="InParanoid" id="Q8N3F9"/>
<dbReference type="OMA" id="CCMCKLS"/>
<dbReference type="OrthoDB" id="192544at2759"/>
<dbReference type="PAN-GO" id="Q8N3F9">
    <property type="GO annotations" value="2 GO annotations based on evolutionary models"/>
</dbReference>
<dbReference type="PhylomeDB" id="Q8N3F9"/>
<dbReference type="TreeFam" id="TF329003"/>
<dbReference type="PathwayCommons" id="Q8N3F9"/>
<dbReference type="SignaLink" id="Q8N3F9"/>
<dbReference type="BioGRID-ORCS" id="283554">
    <property type="hits" value="38 hits in 1147 CRISPR screens"/>
</dbReference>
<dbReference type="ChiTaRS" id="GPR137C">
    <property type="organism name" value="human"/>
</dbReference>
<dbReference type="GenomeRNAi" id="283554"/>
<dbReference type="Pharos" id="Q8N3F9">
    <property type="development level" value="Tdark"/>
</dbReference>
<dbReference type="PRO" id="PR:Q8N3F9"/>
<dbReference type="Proteomes" id="UP000005640">
    <property type="component" value="Chromosome 14"/>
</dbReference>
<dbReference type="RNAct" id="Q8N3F9">
    <property type="molecule type" value="protein"/>
</dbReference>
<dbReference type="Bgee" id="ENSG00000180998">
    <property type="expression patterns" value="Expressed in cerebellar hemisphere and 117 other cell types or tissues"/>
</dbReference>
<dbReference type="ExpressionAtlas" id="Q8N3F9">
    <property type="expression patterns" value="baseline and differential"/>
</dbReference>
<dbReference type="GO" id="GO:0005765">
    <property type="term" value="C:lysosomal membrane"/>
    <property type="evidence" value="ECO:0000314"/>
    <property type="project" value="UniProtKB"/>
</dbReference>
<dbReference type="GO" id="GO:1904263">
    <property type="term" value="P:positive regulation of TORC1 signaling"/>
    <property type="evidence" value="ECO:0000318"/>
    <property type="project" value="GO_Central"/>
</dbReference>
<dbReference type="CDD" id="cd21475">
    <property type="entry name" value="7tm_GPR137C"/>
    <property type="match status" value="1"/>
</dbReference>
<dbReference type="InterPro" id="IPR029723">
    <property type="entry name" value="GPR137"/>
</dbReference>
<dbReference type="PANTHER" id="PTHR15146">
    <property type="entry name" value="INTEGRAL MEMBRANE PROTEIN GPR137"/>
    <property type="match status" value="1"/>
</dbReference>
<dbReference type="PANTHER" id="PTHR15146:SF1">
    <property type="entry name" value="INTEGRAL MEMBRANE PROTEIN GPR137C"/>
    <property type="match status" value="1"/>
</dbReference>